<organism>
    <name type="scientific">Salmonella typhi</name>
    <dbReference type="NCBI Taxonomy" id="90370"/>
    <lineage>
        <taxon>Bacteria</taxon>
        <taxon>Pseudomonadati</taxon>
        <taxon>Pseudomonadota</taxon>
        <taxon>Gammaproteobacteria</taxon>
        <taxon>Enterobacterales</taxon>
        <taxon>Enterobacteriaceae</taxon>
        <taxon>Salmonella</taxon>
    </lineage>
</organism>
<gene>
    <name evidence="1" type="primary">lpxA</name>
    <name type="ordered locus">STY0251</name>
    <name type="ordered locus">t0229</name>
</gene>
<reference key="1">
    <citation type="journal article" date="2001" name="Nature">
        <title>Complete genome sequence of a multiple drug resistant Salmonella enterica serovar Typhi CT18.</title>
        <authorList>
            <person name="Parkhill J."/>
            <person name="Dougan G."/>
            <person name="James K.D."/>
            <person name="Thomson N.R."/>
            <person name="Pickard D."/>
            <person name="Wain J."/>
            <person name="Churcher C.M."/>
            <person name="Mungall K.L."/>
            <person name="Bentley S.D."/>
            <person name="Holden M.T.G."/>
            <person name="Sebaihia M."/>
            <person name="Baker S."/>
            <person name="Basham D."/>
            <person name="Brooks K."/>
            <person name="Chillingworth T."/>
            <person name="Connerton P."/>
            <person name="Cronin A."/>
            <person name="Davis P."/>
            <person name="Davies R.M."/>
            <person name="Dowd L."/>
            <person name="White N."/>
            <person name="Farrar J."/>
            <person name="Feltwell T."/>
            <person name="Hamlin N."/>
            <person name="Haque A."/>
            <person name="Hien T.T."/>
            <person name="Holroyd S."/>
            <person name="Jagels K."/>
            <person name="Krogh A."/>
            <person name="Larsen T.S."/>
            <person name="Leather S."/>
            <person name="Moule S."/>
            <person name="O'Gaora P."/>
            <person name="Parry C."/>
            <person name="Quail M.A."/>
            <person name="Rutherford K.M."/>
            <person name="Simmonds M."/>
            <person name="Skelton J."/>
            <person name="Stevens K."/>
            <person name="Whitehead S."/>
            <person name="Barrell B.G."/>
        </authorList>
    </citation>
    <scope>NUCLEOTIDE SEQUENCE [LARGE SCALE GENOMIC DNA]</scope>
    <source>
        <strain>CT18</strain>
    </source>
</reference>
<reference key="2">
    <citation type="journal article" date="2003" name="J. Bacteriol.">
        <title>Comparative genomics of Salmonella enterica serovar Typhi strains Ty2 and CT18.</title>
        <authorList>
            <person name="Deng W."/>
            <person name="Liou S.-R."/>
            <person name="Plunkett G. III"/>
            <person name="Mayhew G.F."/>
            <person name="Rose D.J."/>
            <person name="Burland V."/>
            <person name="Kodoyianni V."/>
            <person name="Schwartz D.C."/>
            <person name="Blattner F.R."/>
        </authorList>
    </citation>
    <scope>NUCLEOTIDE SEQUENCE [LARGE SCALE GENOMIC DNA]</scope>
    <source>
        <strain>ATCC 700931 / Ty2</strain>
    </source>
</reference>
<feature type="chain" id="PRO_0000188067" description="Acyl-[acyl-carrier-protein]--UDP-N-acetylglucosamine O-acyltransferase">
    <location>
        <begin position="1"/>
        <end position="262"/>
    </location>
</feature>
<accession>Q8Z9A2</accession>
<protein>
    <recommendedName>
        <fullName evidence="1">Acyl-[acyl-carrier-protein]--UDP-N-acetylglucosamine O-acyltransferase</fullName>
        <shortName evidence="1">UDP-N-acetylglucosamine acyltransferase</shortName>
        <ecNumber evidence="1">2.3.1.129</ecNumber>
    </recommendedName>
</protein>
<comment type="function">
    <text evidence="1">Involved in the biosynthesis of lipid A, a phosphorylated glycolipid that anchors the lipopolysaccharide to the outer membrane of the cell.</text>
</comment>
<comment type="catalytic activity">
    <reaction evidence="1">
        <text>a (3R)-hydroxyacyl-[ACP] + UDP-N-acetyl-alpha-D-glucosamine = a UDP-3-O-[(3R)-3-hydroxyacyl]-N-acetyl-alpha-D-glucosamine + holo-[ACP]</text>
        <dbReference type="Rhea" id="RHEA:67812"/>
        <dbReference type="Rhea" id="RHEA-COMP:9685"/>
        <dbReference type="Rhea" id="RHEA-COMP:9945"/>
        <dbReference type="ChEBI" id="CHEBI:57705"/>
        <dbReference type="ChEBI" id="CHEBI:64479"/>
        <dbReference type="ChEBI" id="CHEBI:78827"/>
        <dbReference type="ChEBI" id="CHEBI:173225"/>
        <dbReference type="EC" id="2.3.1.129"/>
    </reaction>
</comment>
<comment type="pathway">
    <text evidence="1">Glycolipid biosynthesis; lipid IV(A) biosynthesis; lipid IV(A) from (3R)-3-hydroxytetradecanoyl-[acyl-carrier-protein] and UDP-N-acetyl-alpha-D-glucosamine: step 1/6.</text>
</comment>
<comment type="subunit">
    <text evidence="1">Homotrimer.</text>
</comment>
<comment type="subcellular location">
    <subcellularLocation>
        <location evidence="1">Cytoplasm</location>
    </subcellularLocation>
</comment>
<comment type="similarity">
    <text evidence="1">Belongs to the transferase hexapeptide repeat family. LpxA subfamily.</text>
</comment>
<keyword id="KW-0012">Acyltransferase</keyword>
<keyword id="KW-0963">Cytoplasm</keyword>
<keyword id="KW-0441">Lipid A biosynthesis</keyword>
<keyword id="KW-0444">Lipid biosynthesis</keyword>
<keyword id="KW-0443">Lipid metabolism</keyword>
<keyword id="KW-0677">Repeat</keyword>
<keyword id="KW-0808">Transferase</keyword>
<dbReference type="EC" id="2.3.1.129" evidence="1"/>
<dbReference type="EMBL" id="AL513382">
    <property type="protein sequence ID" value="CAD08686.1"/>
    <property type="molecule type" value="Genomic_DNA"/>
</dbReference>
<dbReference type="EMBL" id="AE014613">
    <property type="protein sequence ID" value="AAO67959.1"/>
    <property type="molecule type" value="Genomic_DNA"/>
</dbReference>
<dbReference type="RefSeq" id="NP_454835.1">
    <property type="nucleotide sequence ID" value="NC_003198.1"/>
</dbReference>
<dbReference type="RefSeq" id="WP_000566033.1">
    <property type="nucleotide sequence ID" value="NZ_WSUR01000009.1"/>
</dbReference>
<dbReference type="SMR" id="Q8Z9A2"/>
<dbReference type="STRING" id="220341.gene:17584284"/>
<dbReference type="KEGG" id="stt:t0229"/>
<dbReference type="KEGG" id="sty:STY0251"/>
<dbReference type="PATRIC" id="fig|220341.7.peg.251"/>
<dbReference type="eggNOG" id="COG1043">
    <property type="taxonomic scope" value="Bacteria"/>
</dbReference>
<dbReference type="HOGENOM" id="CLU_061249_0_0_6"/>
<dbReference type="OMA" id="ECVTINR"/>
<dbReference type="OrthoDB" id="9807278at2"/>
<dbReference type="UniPathway" id="UPA00359">
    <property type="reaction ID" value="UER00477"/>
</dbReference>
<dbReference type="Proteomes" id="UP000000541">
    <property type="component" value="Chromosome"/>
</dbReference>
<dbReference type="Proteomes" id="UP000002670">
    <property type="component" value="Chromosome"/>
</dbReference>
<dbReference type="GO" id="GO:0005737">
    <property type="term" value="C:cytoplasm"/>
    <property type="evidence" value="ECO:0007669"/>
    <property type="project" value="UniProtKB-SubCell"/>
</dbReference>
<dbReference type="GO" id="GO:0016020">
    <property type="term" value="C:membrane"/>
    <property type="evidence" value="ECO:0007669"/>
    <property type="project" value="GOC"/>
</dbReference>
<dbReference type="GO" id="GO:0008780">
    <property type="term" value="F:acyl-[acyl-carrier-protein]-UDP-N-acetylglucosamine O-acyltransferase activity"/>
    <property type="evidence" value="ECO:0007669"/>
    <property type="project" value="UniProtKB-UniRule"/>
</dbReference>
<dbReference type="GO" id="GO:0009245">
    <property type="term" value="P:lipid A biosynthetic process"/>
    <property type="evidence" value="ECO:0007669"/>
    <property type="project" value="UniProtKB-UniRule"/>
</dbReference>
<dbReference type="CDD" id="cd03351">
    <property type="entry name" value="LbH_UDP-GlcNAc_AT"/>
    <property type="match status" value="1"/>
</dbReference>
<dbReference type="FunFam" id="2.160.10.10:FF:000003">
    <property type="entry name" value="Acyl-[acyl-carrier-protein]--UDP-N-acetylglucosamine O-acyltransferase"/>
    <property type="match status" value="1"/>
</dbReference>
<dbReference type="Gene3D" id="2.160.10.10">
    <property type="entry name" value="Hexapeptide repeat proteins"/>
    <property type="match status" value="1"/>
</dbReference>
<dbReference type="Gene3D" id="1.20.1180.10">
    <property type="entry name" value="Udp N-acetylglucosamine O-acyltransferase, C-terminal domain"/>
    <property type="match status" value="1"/>
</dbReference>
<dbReference type="HAMAP" id="MF_00387">
    <property type="entry name" value="LpxA"/>
    <property type="match status" value="1"/>
</dbReference>
<dbReference type="InterPro" id="IPR029098">
    <property type="entry name" value="Acetyltransf_C"/>
</dbReference>
<dbReference type="InterPro" id="IPR037157">
    <property type="entry name" value="Acetyltransf_C_sf"/>
</dbReference>
<dbReference type="InterPro" id="IPR001451">
    <property type="entry name" value="Hexapep"/>
</dbReference>
<dbReference type="InterPro" id="IPR018357">
    <property type="entry name" value="Hexapep_transf_CS"/>
</dbReference>
<dbReference type="InterPro" id="IPR010137">
    <property type="entry name" value="Lipid_A_LpxA"/>
</dbReference>
<dbReference type="InterPro" id="IPR011004">
    <property type="entry name" value="Trimer_LpxA-like_sf"/>
</dbReference>
<dbReference type="NCBIfam" id="TIGR01852">
    <property type="entry name" value="lipid_A_lpxA"/>
    <property type="match status" value="1"/>
</dbReference>
<dbReference type="NCBIfam" id="NF003657">
    <property type="entry name" value="PRK05289.1"/>
    <property type="match status" value="1"/>
</dbReference>
<dbReference type="PANTHER" id="PTHR43480">
    <property type="entry name" value="ACYL-[ACYL-CARRIER-PROTEIN]--UDP-N-ACETYLGLUCOSAMINE O-ACYLTRANSFERASE"/>
    <property type="match status" value="1"/>
</dbReference>
<dbReference type="PANTHER" id="PTHR43480:SF1">
    <property type="entry name" value="ACYL-[ACYL-CARRIER-PROTEIN]--UDP-N-ACETYLGLUCOSAMINE O-ACYLTRANSFERASE, MITOCHONDRIAL-RELATED"/>
    <property type="match status" value="1"/>
</dbReference>
<dbReference type="Pfam" id="PF13720">
    <property type="entry name" value="Acetyltransf_11"/>
    <property type="match status" value="1"/>
</dbReference>
<dbReference type="Pfam" id="PF00132">
    <property type="entry name" value="Hexapep"/>
    <property type="match status" value="2"/>
</dbReference>
<dbReference type="PIRSF" id="PIRSF000456">
    <property type="entry name" value="UDP-GlcNAc_acltr"/>
    <property type="match status" value="1"/>
</dbReference>
<dbReference type="SUPFAM" id="SSF51161">
    <property type="entry name" value="Trimeric LpxA-like enzymes"/>
    <property type="match status" value="1"/>
</dbReference>
<dbReference type="PROSITE" id="PS00101">
    <property type="entry name" value="HEXAPEP_TRANSFERASES"/>
    <property type="match status" value="2"/>
</dbReference>
<evidence type="ECO:0000255" key="1">
    <source>
        <dbReference type="HAMAP-Rule" id="MF_00387"/>
    </source>
</evidence>
<proteinExistence type="inferred from homology"/>
<name>LPXA_SALTI</name>
<sequence>MIDKSVFIHPTAIVEDGAVIGANAHIGPFCIVGPQVEIGEGTVLKSHVVVNGQTKIGRDNEIYQFASIGEVNQDLKYAGEPTRVEIGDRNRIRESVTIHRGTVQGGGLTKVGSDNLLMINAHVAHDCTVGNRCILANNATLAGHVSVDDFAIIGGMTAVHQFCIIGAHVMVGGCSGVAQDVPPYVIAQGNHATPFGVNIEGLKRRGFSREGLVAIRNAYKLLYRSGKTLDEAKLEIAELAEKHPEVKAFTEFFERSTRGPIR</sequence>